<dbReference type="EMBL" id="AACD01000061">
    <property type="protein sequence ID" value="EAA59995.1"/>
    <property type="molecule type" value="Genomic_DNA"/>
</dbReference>
<dbReference type="EMBL" id="BN001302">
    <property type="protein sequence ID" value="CBF75384.1"/>
    <property type="molecule type" value="Genomic_DNA"/>
</dbReference>
<dbReference type="RefSeq" id="XP_661391.1">
    <property type="nucleotide sequence ID" value="XM_656299.1"/>
</dbReference>
<dbReference type="SMR" id="Q5B6P3"/>
<dbReference type="FunCoup" id="Q5B6P3">
    <property type="interactions" value="87"/>
</dbReference>
<dbReference type="STRING" id="227321.Q5B6P3"/>
<dbReference type="EnsemblFungi" id="CBF75384">
    <property type="protein sequence ID" value="CBF75384"/>
    <property type="gene ID" value="ANIA_03787"/>
</dbReference>
<dbReference type="KEGG" id="ani:ANIA_03787"/>
<dbReference type="VEuPathDB" id="FungiDB:AN3787"/>
<dbReference type="eggNOG" id="KOG0909">
    <property type="taxonomic scope" value="Eukaryota"/>
</dbReference>
<dbReference type="HOGENOM" id="CLU_031058_1_0_1"/>
<dbReference type="InParanoid" id="Q5B6P3"/>
<dbReference type="OMA" id="AWDKPRL"/>
<dbReference type="OrthoDB" id="409136at2759"/>
<dbReference type="Proteomes" id="UP000000560">
    <property type="component" value="Chromosome II"/>
</dbReference>
<dbReference type="GO" id="GO:0005829">
    <property type="term" value="C:cytosol"/>
    <property type="evidence" value="ECO:0000318"/>
    <property type="project" value="GO_Central"/>
</dbReference>
<dbReference type="GO" id="GO:0005634">
    <property type="term" value="C:nucleus"/>
    <property type="evidence" value="ECO:0000318"/>
    <property type="project" value="GO_Central"/>
</dbReference>
<dbReference type="GO" id="GO:0046872">
    <property type="term" value="F:metal ion binding"/>
    <property type="evidence" value="ECO:0007669"/>
    <property type="project" value="UniProtKB-KW"/>
</dbReference>
<dbReference type="GO" id="GO:0000224">
    <property type="term" value="F:peptide-N4-(N-acetyl-beta-glucosaminyl)asparagine amidase activity"/>
    <property type="evidence" value="ECO:0000318"/>
    <property type="project" value="GO_Central"/>
</dbReference>
<dbReference type="GO" id="GO:0006516">
    <property type="term" value="P:glycoprotein catabolic process"/>
    <property type="evidence" value="ECO:0000318"/>
    <property type="project" value="GO_Central"/>
</dbReference>
<dbReference type="FunFam" id="3.10.620.30:FF:000004">
    <property type="entry name" value="Peptidase (PNG1)"/>
    <property type="match status" value="1"/>
</dbReference>
<dbReference type="FunFam" id="2.20.25.10:FF:000011">
    <property type="entry name" value="peptide-N(4)-(N-acetyl-beta- glucosaminyl)asparagine amidase"/>
    <property type="match status" value="1"/>
</dbReference>
<dbReference type="Gene3D" id="2.20.25.10">
    <property type="match status" value="1"/>
</dbReference>
<dbReference type="Gene3D" id="3.10.620.30">
    <property type="match status" value="1"/>
</dbReference>
<dbReference type="InterPro" id="IPR038765">
    <property type="entry name" value="Papain-like_cys_pep_sf"/>
</dbReference>
<dbReference type="InterPro" id="IPR050883">
    <property type="entry name" value="PNGase"/>
</dbReference>
<dbReference type="InterPro" id="IPR002931">
    <property type="entry name" value="Transglutaminase-like"/>
</dbReference>
<dbReference type="PANTHER" id="PTHR12143">
    <property type="entry name" value="PEPTIDE N-GLYCANASE PNGASE -RELATED"/>
    <property type="match status" value="1"/>
</dbReference>
<dbReference type="PANTHER" id="PTHR12143:SF19">
    <property type="entry name" value="PEPTIDE-N(4)-(N-ACETYL-BETA-GLUCOSAMINYL)ASPARAGINE AMIDASE"/>
    <property type="match status" value="1"/>
</dbReference>
<dbReference type="Pfam" id="PF01841">
    <property type="entry name" value="Transglut_core"/>
    <property type="match status" value="1"/>
</dbReference>
<dbReference type="SMART" id="SM00460">
    <property type="entry name" value="TGc"/>
    <property type="match status" value="1"/>
</dbReference>
<dbReference type="SUPFAM" id="SSF54001">
    <property type="entry name" value="Cysteine proteinases"/>
    <property type="match status" value="1"/>
</dbReference>
<proteinExistence type="evidence at protein level"/>
<sequence length="441" mass="50980">MADGKHHHSRRAPTTDAFDPAELTHAFEQLMRVKRFDRLLEKSRSPSRTQSPSPSPYRSQPSHPSQALPATQPAQPQPSSQSPSLRNLPIVPYPPQDQNAFKFRNLLHVLSVTPTKYENPGLLDEALSLIPLDKLYSEADEECQIIQAQARSLKRKPEWGYQDCVIRALLRWFKRSFFHWVNNPPCSRCLTPTIAHGRAPPTPDEAARGANRVELYRCADPSCGAYERFPRYSDVWQLLQTRRGRVGEWANCFSMFCRALGGRVRWVWNSEDYVWTEVYSEHQKRWIHVDACEETWDQPRLYAEGWGRKISYCIAFSIDGATDVTRRYVRSPAKHGAPRSRVPEEVLVWIIQEIRKMRRENRPKEEQRRLFKEDEREERELRMYTACALAAELKNLLPSNRSPSARPDEVKVPQTAEPQAAWNNSRQRSGHSGPDGSQGDR</sequence>
<feature type="chain" id="PRO_0000248989" description="Protein PNG1">
    <location>
        <begin position="1"/>
        <end position="441"/>
    </location>
</feature>
<feature type="region of interest" description="Disordered" evidence="2">
    <location>
        <begin position="1"/>
        <end position="23"/>
    </location>
</feature>
<feature type="region of interest" description="Disordered" evidence="2">
    <location>
        <begin position="38"/>
        <end position="91"/>
    </location>
</feature>
<feature type="region of interest" description="Disordered" evidence="2">
    <location>
        <begin position="397"/>
        <end position="441"/>
    </location>
</feature>
<feature type="compositionally biased region" description="Basic residues" evidence="2">
    <location>
        <begin position="1"/>
        <end position="11"/>
    </location>
</feature>
<feature type="compositionally biased region" description="Low complexity" evidence="2">
    <location>
        <begin position="46"/>
        <end position="84"/>
    </location>
</feature>
<feature type="binding site" evidence="1">
    <location>
        <position position="186"/>
    </location>
    <ligand>
        <name>Zn(2+)</name>
        <dbReference type="ChEBI" id="CHEBI:29105"/>
    </ligand>
</feature>
<feature type="binding site" evidence="1">
    <location>
        <position position="189"/>
    </location>
    <ligand>
        <name>Zn(2+)</name>
        <dbReference type="ChEBI" id="CHEBI:29105"/>
    </ligand>
</feature>
<feature type="binding site" evidence="1">
    <location>
        <position position="218"/>
    </location>
    <ligand>
        <name>Zn(2+)</name>
        <dbReference type="ChEBI" id="CHEBI:29105"/>
    </ligand>
</feature>
<feature type="binding site" evidence="1">
    <location>
        <position position="223"/>
    </location>
    <ligand>
        <name>Zn(2+)</name>
        <dbReference type="ChEBI" id="CHEBI:29105"/>
    </ligand>
</feature>
<feature type="modified residue" description="Methylhistidine" evidence="3">
    <location>
        <position position="6"/>
    </location>
</feature>
<feature type="modified residue" description="Methylhistidine" evidence="3">
    <location>
        <position position="7"/>
    </location>
</feature>
<feature type="modified residue" description="Methylhistidine" evidence="3">
    <location>
        <position position="8"/>
    </location>
</feature>
<comment type="similarity">
    <text evidence="4">Belongs to the transglutaminase-like superfamily. PNGase family.</text>
</comment>
<comment type="caution">
    <text evidence="4">Although strongly related to the peptide:N-glycanase enzyme, it lacks the conserved active site Cys in position 246, which is replaced by a Val residue suggesting that it has no activity.</text>
</comment>
<keyword id="KW-0479">Metal-binding</keyword>
<keyword id="KW-0488">Methylation</keyword>
<keyword id="KW-1185">Reference proteome</keyword>
<keyword id="KW-0862">Zinc</keyword>
<organism>
    <name type="scientific">Emericella nidulans (strain FGSC A4 / ATCC 38163 / CBS 112.46 / NRRL 194 / M139)</name>
    <name type="common">Aspergillus nidulans</name>
    <dbReference type="NCBI Taxonomy" id="227321"/>
    <lineage>
        <taxon>Eukaryota</taxon>
        <taxon>Fungi</taxon>
        <taxon>Dikarya</taxon>
        <taxon>Ascomycota</taxon>
        <taxon>Pezizomycotina</taxon>
        <taxon>Eurotiomycetes</taxon>
        <taxon>Eurotiomycetidae</taxon>
        <taxon>Eurotiales</taxon>
        <taxon>Aspergillaceae</taxon>
        <taxon>Aspergillus</taxon>
        <taxon>Aspergillus subgen. Nidulantes</taxon>
    </lineage>
</organism>
<evidence type="ECO:0000250" key="1"/>
<evidence type="ECO:0000256" key="2">
    <source>
        <dbReference type="SAM" id="MobiDB-lite"/>
    </source>
</evidence>
<evidence type="ECO:0000269" key="3">
    <source>
    </source>
</evidence>
<evidence type="ECO:0000305" key="4"/>
<protein>
    <recommendedName>
        <fullName>Protein PNG1</fullName>
    </recommendedName>
</protein>
<name>PNG1_EMENI</name>
<gene>
    <name type="primary">png1</name>
    <name type="ORF">AN3787</name>
</gene>
<accession>Q5B6P3</accession>
<accession>C8V705</accession>
<reference key="1">
    <citation type="journal article" date="2005" name="Nature">
        <title>Sequencing of Aspergillus nidulans and comparative analysis with A. fumigatus and A. oryzae.</title>
        <authorList>
            <person name="Galagan J.E."/>
            <person name="Calvo S.E."/>
            <person name="Cuomo C."/>
            <person name="Ma L.-J."/>
            <person name="Wortman J.R."/>
            <person name="Batzoglou S."/>
            <person name="Lee S.-I."/>
            <person name="Bastuerkmen M."/>
            <person name="Spevak C.C."/>
            <person name="Clutterbuck J."/>
            <person name="Kapitonov V."/>
            <person name="Jurka J."/>
            <person name="Scazzocchio C."/>
            <person name="Farman M.L."/>
            <person name="Butler J."/>
            <person name="Purcell S."/>
            <person name="Harris S."/>
            <person name="Braus G.H."/>
            <person name="Draht O."/>
            <person name="Busch S."/>
            <person name="D'Enfert C."/>
            <person name="Bouchier C."/>
            <person name="Goldman G.H."/>
            <person name="Bell-Pedersen D."/>
            <person name="Griffiths-Jones S."/>
            <person name="Doonan J.H."/>
            <person name="Yu J."/>
            <person name="Vienken K."/>
            <person name="Pain A."/>
            <person name="Freitag M."/>
            <person name="Selker E.U."/>
            <person name="Archer D.B."/>
            <person name="Penalva M.A."/>
            <person name="Oakley B.R."/>
            <person name="Momany M."/>
            <person name="Tanaka T."/>
            <person name="Kumagai T."/>
            <person name="Asai K."/>
            <person name="Machida M."/>
            <person name="Nierman W.C."/>
            <person name="Denning D.W."/>
            <person name="Caddick M.X."/>
            <person name="Hynes M."/>
            <person name="Paoletti M."/>
            <person name="Fischer R."/>
            <person name="Miller B.L."/>
            <person name="Dyer P.S."/>
            <person name="Sachs M.S."/>
            <person name="Osmani S.A."/>
            <person name="Birren B.W."/>
        </authorList>
    </citation>
    <scope>NUCLEOTIDE SEQUENCE [LARGE SCALE GENOMIC DNA]</scope>
    <source>
        <strain>FGSC A4 / ATCC 38163 / CBS 112.46 / NRRL 194 / M139</strain>
    </source>
</reference>
<reference key="2">
    <citation type="journal article" date="2009" name="Fungal Genet. Biol.">
        <title>The 2008 update of the Aspergillus nidulans genome annotation: a community effort.</title>
        <authorList>
            <person name="Wortman J.R."/>
            <person name="Gilsenan J.M."/>
            <person name="Joardar V."/>
            <person name="Deegan J."/>
            <person name="Clutterbuck J."/>
            <person name="Andersen M.R."/>
            <person name="Archer D."/>
            <person name="Bencina M."/>
            <person name="Braus G."/>
            <person name="Coutinho P."/>
            <person name="von Dohren H."/>
            <person name="Doonan J."/>
            <person name="Driessen A.J."/>
            <person name="Durek P."/>
            <person name="Espeso E."/>
            <person name="Fekete E."/>
            <person name="Flipphi M."/>
            <person name="Estrada C.G."/>
            <person name="Geysens S."/>
            <person name="Goldman G."/>
            <person name="de Groot P.W."/>
            <person name="Hansen K."/>
            <person name="Harris S.D."/>
            <person name="Heinekamp T."/>
            <person name="Helmstaedt K."/>
            <person name="Henrissat B."/>
            <person name="Hofmann G."/>
            <person name="Homan T."/>
            <person name="Horio T."/>
            <person name="Horiuchi H."/>
            <person name="James S."/>
            <person name="Jones M."/>
            <person name="Karaffa L."/>
            <person name="Karanyi Z."/>
            <person name="Kato M."/>
            <person name="Keller N."/>
            <person name="Kelly D.E."/>
            <person name="Kiel J.A."/>
            <person name="Kim J.M."/>
            <person name="van der Klei I.J."/>
            <person name="Klis F.M."/>
            <person name="Kovalchuk A."/>
            <person name="Krasevec N."/>
            <person name="Kubicek C.P."/>
            <person name="Liu B."/>
            <person name="Maccabe A."/>
            <person name="Meyer V."/>
            <person name="Mirabito P."/>
            <person name="Miskei M."/>
            <person name="Mos M."/>
            <person name="Mullins J."/>
            <person name="Nelson D.R."/>
            <person name="Nielsen J."/>
            <person name="Oakley B.R."/>
            <person name="Osmani S.A."/>
            <person name="Pakula T."/>
            <person name="Paszewski A."/>
            <person name="Paulsen I."/>
            <person name="Pilsyk S."/>
            <person name="Pocsi I."/>
            <person name="Punt P.J."/>
            <person name="Ram A.F."/>
            <person name="Ren Q."/>
            <person name="Robellet X."/>
            <person name="Robson G."/>
            <person name="Seiboth B."/>
            <person name="van Solingen P."/>
            <person name="Specht T."/>
            <person name="Sun J."/>
            <person name="Taheri-Talesh N."/>
            <person name="Takeshita N."/>
            <person name="Ussery D."/>
            <person name="vanKuyk P.A."/>
            <person name="Visser H."/>
            <person name="van de Vondervoort P.J."/>
            <person name="de Vries R.P."/>
            <person name="Walton J."/>
            <person name="Xiang X."/>
            <person name="Xiong Y."/>
            <person name="Zeng A.P."/>
            <person name="Brandt B.W."/>
            <person name="Cornell M.J."/>
            <person name="van den Hondel C.A."/>
            <person name="Visser J."/>
            <person name="Oliver S.G."/>
            <person name="Turner G."/>
        </authorList>
    </citation>
    <scope>GENOME REANNOTATION</scope>
    <source>
        <strain>FGSC A4 / ATCC 38163 / CBS 112.46 / NRRL 194 / M139</strain>
    </source>
</reference>
<reference key="3">
    <citation type="journal article" date="2023" name="Nat. Commun.">
        <title>A seven-transmembrane methyltransferase catalysing N-terminal histidine methylation of lytic polysaccharide monooxygenases.</title>
        <authorList>
            <person name="Batth T.S."/>
            <person name="Simonsen J.L."/>
            <person name="Hernandez-Rollan C."/>
            <person name="Brander S."/>
            <person name="Morth J.P."/>
            <person name="Johansen K.S."/>
            <person name="Noerholm M.H.H."/>
            <person name="Hoof J.B."/>
            <person name="Olsen J.V."/>
        </authorList>
    </citation>
    <scope>METHYLATION AT HIS-6; HIS-7 AND HIS-8</scope>
</reference>